<gene>
    <name evidence="1" type="primary">recF</name>
    <name type="ordered locus">Clos_0004</name>
</gene>
<reference key="1">
    <citation type="submission" date="2007-10" db="EMBL/GenBank/DDBJ databases">
        <title>Complete genome of Alkaliphilus oremlandii OhILAs.</title>
        <authorList>
            <person name="Copeland A."/>
            <person name="Lucas S."/>
            <person name="Lapidus A."/>
            <person name="Barry K."/>
            <person name="Detter J.C."/>
            <person name="Glavina del Rio T."/>
            <person name="Hammon N."/>
            <person name="Israni S."/>
            <person name="Dalin E."/>
            <person name="Tice H."/>
            <person name="Pitluck S."/>
            <person name="Chain P."/>
            <person name="Malfatti S."/>
            <person name="Shin M."/>
            <person name="Vergez L."/>
            <person name="Schmutz J."/>
            <person name="Larimer F."/>
            <person name="Land M."/>
            <person name="Hauser L."/>
            <person name="Kyrpides N."/>
            <person name="Mikhailova N."/>
            <person name="Stolz J.F."/>
            <person name="Dawson A."/>
            <person name="Fisher E."/>
            <person name="Crable B."/>
            <person name="Perera E."/>
            <person name="Lisak J."/>
            <person name="Ranganathan M."/>
            <person name="Basu P."/>
            <person name="Richardson P."/>
        </authorList>
    </citation>
    <scope>NUCLEOTIDE SEQUENCE [LARGE SCALE GENOMIC DNA]</scope>
    <source>
        <strain>OhILAs</strain>
    </source>
</reference>
<accession>A8MEA3</accession>
<dbReference type="EMBL" id="CP000853">
    <property type="protein sequence ID" value="ABW17574.1"/>
    <property type="molecule type" value="Genomic_DNA"/>
</dbReference>
<dbReference type="RefSeq" id="WP_012157889.1">
    <property type="nucleotide sequence ID" value="NC_009922.1"/>
</dbReference>
<dbReference type="SMR" id="A8MEA3"/>
<dbReference type="STRING" id="350688.Clos_0004"/>
<dbReference type="KEGG" id="aoe:Clos_0004"/>
<dbReference type="eggNOG" id="COG1195">
    <property type="taxonomic scope" value="Bacteria"/>
</dbReference>
<dbReference type="HOGENOM" id="CLU_040267_0_1_9"/>
<dbReference type="OrthoDB" id="9803889at2"/>
<dbReference type="Proteomes" id="UP000000269">
    <property type="component" value="Chromosome"/>
</dbReference>
<dbReference type="GO" id="GO:0005737">
    <property type="term" value="C:cytoplasm"/>
    <property type="evidence" value="ECO:0007669"/>
    <property type="project" value="UniProtKB-SubCell"/>
</dbReference>
<dbReference type="GO" id="GO:0005524">
    <property type="term" value="F:ATP binding"/>
    <property type="evidence" value="ECO:0007669"/>
    <property type="project" value="UniProtKB-UniRule"/>
</dbReference>
<dbReference type="GO" id="GO:0003697">
    <property type="term" value="F:single-stranded DNA binding"/>
    <property type="evidence" value="ECO:0007669"/>
    <property type="project" value="UniProtKB-UniRule"/>
</dbReference>
<dbReference type="GO" id="GO:0006260">
    <property type="term" value="P:DNA replication"/>
    <property type="evidence" value="ECO:0007669"/>
    <property type="project" value="UniProtKB-UniRule"/>
</dbReference>
<dbReference type="GO" id="GO:0000731">
    <property type="term" value="P:DNA synthesis involved in DNA repair"/>
    <property type="evidence" value="ECO:0007669"/>
    <property type="project" value="TreeGrafter"/>
</dbReference>
<dbReference type="GO" id="GO:0006302">
    <property type="term" value="P:double-strand break repair"/>
    <property type="evidence" value="ECO:0007669"/>
    <property type="project" value="TreeGrafter"/>
</dbReference>
<dbReference type="GO" id="GO:0009432">
    <property type="term" value="P:SOS response"/>
    <property type="evidence" value="ECO:0007669"/>
    <property type="project" value="UniProtKB-UniRule"/>
</dbReference>
<dbReference type="CDD" id="cd03242">
    <property type="entry name" value="ABC_RecF"/>
    <property type="match status" value="1"/>
</dbReference>
<dbReference type="Gene3D" id="3.40.50.300">
    <property type="entry name" value="P-loop containing nucleotide triphosphate hydrolases"/>
    <property type="match status" value="1"/>
</dbReference>
<dbReference type="Gene3D" id="1.20.1050.90">
    <property type="entry name" value="RecF/RecN/SMC, N-terminal domain"/>
    <property type="match status" value="1"/>
</dbReference>
<dbReference type="HAMAP" id="MF_00365">
    <property type="entry name" value="RecF"/>
    <property type="match status" value="1"/>
</dbReference>
<dbReference type="InterPro" id="IPR001238">
    <property type="entry name" value="DNA-binding_RecF"/>
</dbReference>
<dbReference type="InterPro" id="IPR018078">
    <property type="entry name" value="DNA-binding_RecF_CS"/>
</dbReference>
<dbReference type="InterPro" id="IPR027417">
    <property type="entry name" value="P-loop_NTPase"/>
</dbReference>
<dbReference type="InterPro" id="IPR003395">
    <property type="entry name" value="RecF/RecN/SMC_N"/>
</dbReference>
<dbReference type="InterPro" id="IPR042174">
    <property type="entry name" value="RecF_2"/>
</dbReference>
<dbReference type="NCBIfam" id="TIGR00611">
    <property type="entry name" value="recf"/>
    <property type="match status" value="1"/>
</dbReference>
<dbReference type="PANTHER" id="PTHR32182">
    <property type="entry name" value="DNA REPLICATION AND REPAIR PROTEIN RECF"/>
    <property type="match status" value="1"/>
</dbReference>
<dbReference type="PANTHER" id="PTHR32182:SF0">
    <property type="entry name" value="DNA REPLICATION AND REPAIR PROTEIN RECF"/>
    <property type="match status" value="1"/>
</dbReference>
<dbReference type="Pfam" id="PF02463">
    <property type="entry name" value="SMC_N"/>
    <property type="match status" value="1"/>
</dbReference>
<dbReference type="SUPFAM" id="SSF52540">
    <property type="entry name" value="P-loop containing nucleoside triphosphate hydrolases"/>
    <property type="match status" value="1"/>
</dbReference>
<dbReference type="PROSITE" id="PS00617">
    <property type="entry name" value="RECF_1"/>
    <property type="match status" value="1"/>
</dbReference>
<dbReference type="PROSITE" id="PS00618">
    <property type="entry name" value="RECF_2"/>
    <property type="match status" value="1"/>
</dbReference>
<name>RECF_ALKOO</name>
<comment type="function">
    <text evidence="1">The RecF protein is involved in DNA metabolism; it is required for DNA replication and normal SOS inducibility. RecF binds preferentially to single-stranded, linear DNA. It also seems to bind ATP.</text>
</comment>
<comment type="subcellular location">
    <subcellularLocation>
        <location evidence="1">Cytoplasm</location>
    </subcellularLocation>
</comment>
<comment type="similarity">
    <text evidence="1">Belongs to the RecF family.</text>
</comment>
<feature type="chain" id="PRO_1000059899" description="DNA replication and repair protein RecF">
    <location>
        <begin position="1"/>
        <end position="365"/>
    </location>
</feature>
<feature type="binding site" evidence="1">
    <location>
        <begin position="30"/>
        <end position="37"/>
    </location>
    <ligand>
        <name>ATP</name>
        <dbReference type="ChEBI" id="CHEBI:30616"/>
    </ligand>
</feature>
<proteinExistence type="inferred from homology"/>
<organism>
    <name type="scientific">Alkaliphilus oremlandii (strain OhILAs)</name>
    <name type="common">Clostridium oremlandii (strain OhILAs)</name>
    <dbReference type="NCBI Taxonomy" id="350688"/>
    <lineage>
        <taxon>Bacteria</taxon>
        <taxon>Bacillati</taxon>
        <taxon>Bacillota</taxon>
        <taxon>Clostridia</taxon>
        <taxon>Peptostreptococcales</taxon>
        <taxon>Natronincolaceae</taxon>
        <taxon>Alkaliphilus</taxon>
    </lineage>
</organism>
<sequence>MIVEELKLINYRNYEQMNLKFHPRLNVFIGDNAQGKTNLIESIYLCSAGKSFRTNHDQELINMNKKQAYIHVKVKKVHSDVHIEVRLNSERKKDLKVNQIPLVKMGELLGNLNVVLFSPEDLKLVKEGPSERRRFMDREISQISTKFYYTLSQYNKILQHRNKLLKYNKGKEIDIEVWDEQLAAAGAWLIVYRRNFIKKISILAKLMHRKITESIENLEVIYEPNVKVKENDEVDVIKEKILQNLKENFNVDKQRGLTTCGPHRDDMILKINGLDVKTYGSQGQQRTAVLSLKLAELELVKGEVGEYPILLLDDVMSELDSKRQHYLIHNLKSVQTFITTTMMETLKDLKPEDRAVFYVNKGQID</sequence>
<keyword id="KW-0067">ATP-binding</keyword>
<keyword id="KW-0963">Cytoplasm</keyword>
<keyword id="KW-0227">DNA damage</keyword>
<keyword id="KW-0234">DNA repair</keyword>
<keyword id="KW-0235">DNA replication</keyword>
<keyword id="KW-0238">DNA-binding</keyword>
<keyword id="KW-0547">Nucleotide-binding</keyword>
<keyword id="KW-1185">Reference proteome</keyword>
<keyword id="KW-0742">SOS response</keyword>
<protein>
    <recommendedName>
        <fullName evidence="1">DNA replication and repair protein RecF</fullName>
    </recommendedName>
</protein>
<evidence type="ECO:0000255" key="1">
    <source>
        <dbReference type="HAMAP-Rule" id="MF_00365"/>
    </source>
</evidence>